<proteinExistence type="inferred from homology"/>
<protein>
    <recommendedName>
        <fullName evidence="1">Large ribosomal subunit protein uL15</fullName>
    </recommendedName>
    <alternativeName>
        <fullName evidence="3">50S ribosomal protein L15</fullName>
    </alternativeName>
</protein>
<reference key="1">
    <citation type="journal article" date="2007" name="ISME J.">
        <title>Population level functional diversity in a microbial community revealed by comparative genomic and metagenomic analyses.</title>
        <authorList>
            <person name="Bhaya D."/>
            <person name="Grossman A.R."/>
            <person name="Steunou A.-S."/>
            <person name="Khuri N."/>
            <person name="Cohan F.M."/>
            <person name="Hamamura N."/>
            <person name="Melendrez M.C."/>
            <person name="Bateson M.M."/>
            <person name="Ward D.M."/>
            <person name="Heidelberg J.F."/>
        </authorList>
    </citation>
    <scope>NUCLEOTIDE SEQUENCE [LARGE SCALE GENOMIC DNA]</scope>
    <source>
        <strain>JA-2-3B'a(2-13)</strain>
    </source>
</reference>
<accession>Q2JIL0</accession>
<organism>
    <name type="scientific">Synechococcus sp. (strain JA-2-3B'a(2-13))</name>
    <name type="common">Cyanobacteria bacterium Yellowstone B-Prime</name>
    <dbReference type="NCBI Taxonomy" id="321332"/>
    <lineage>
        <taxon>Bacteria</taxon>
        <taxon>Bacillati</taxon>
        <taxon>Cyanobacteriota</taxon>
        <taxon>Cyanophyceae</taxon>
        <taxon>Synechococcales</taxon>
        <taxon>Synechococcaceae</taxon>
        <taxon>Synechococcus</taxon>
    </lineage>
</organism>
<evidence type="ECO:0000255" key="1">
    <source>
        <dbReference type="HAMAP-Rule" id="MF_01341"/>
    </source>
</evidence>
<evidence type="ECO:0000256" key="2">
    <source>
        <dbReference type="SAM" id="MobiDB-lite"/>
    </source>
</evidence>
<evidence type="ECO:0000305" key="3"/>
<dbReference type="EMBL" id="CP000240">
    <property type="protein sequence ID" value="ABD03544.1"/>
    <property type="molecule type" value="Genomic_DNA"/>
</dbReference>
<dbReference type="RefSeq" id="WP_011434169.1">
    <property type="nucleotide sequence ID" value="NC_007776.1"/>
</dbReference>
<dbReference type="SMR" id="Q2JIL0"/>
<dbReference type="STRING" id="321332.CYB_2614"/>
<dbReference type="KEGG" id="cyb:CYB_2614"/>
<dbReference type="eggNOG" id="COG0200">
    <property type="taxonomic scope" value="Bacteria"/>
</dbReference>
<dbReference type="HOGENOM" id="CLU_055188_4_2_3"/>
<dbReference type="OrthoDB" id="9810293at2"/>
<dbReference type="Proteomes" id="UP000001938">
    <property type="component" value="Chromosome"/>
</dbReference>
<dbReference type="GO" id="GO:0022625">
    <property type="term" value="C:cytosolic large ribosomal subunit"/>
    <property type="evidence" value="ECO:0007669"/>
    <property type="project" value="TreeGrafter"/>
</dbReference>
<dbReference type="GO" id="GO:0019843">
    <property type="term" value="F:rRNA binding"/>
    <property type="evidence" value="ECO:0007669"/>
    <property type="project" value="UniProtKB-UniRule"/>
</dbReference>
<dbReference type="GO" id="GO:0003735">
    <property type="term" value="F:structural constituent of ribosome"/>
    <property type="evidence" value="ECO:0007669"/>
    <property type="project" value="InterPro"/>
</dbReference>
<dbReference type="GO" id="GO:0006412">
    <property type="term" value="P:translation"/>
    <property type="evidence" value="ECO:0007669"/>
    <property type="project" value="UniProtKB-UniRule"/>
</dbReference>
<dbReference type="Gene3D" id="3.100.10.10">
    <property type="match status" value="1"/>
</dbReference>
<dbReference type="HAMAP" id="MF_01341">
    <property type="entry name" value="Ribosomal_uL15"/>
    <property type="match status" value="1"/>
</dbReference>
<dbReference type="InterPro" id="IPR030878">
    <property type="entry name" value="Ribosomal_uL15"/>
</dbReference>
<dbReference type="InterPro" id="IPR021131">
    <property type="entry name" value="Ribosomal_uL15/eL18"/>
</dbReference>
<dbReference type="InterPro" id="IPR036227">
    <property type="entry name" value="Ribosomal_uL15/eL18_sf"/>
</dbReference>
<dbReference type="InterPro" id="IPR005749">
    <property type="entry name" value="Ribosomal_uL15_bac-type"/>
</dbReference>
<dbReference type="InterPro" id="IPR001196">
    <property type="entry name" value="Ribosomal_uL15_CS"/>
</dbReference>
<dbReference type="NCBIfam" id="TIGR01071">
    <property type="entry name" value="rplO_bact"/>
    <property type="match status" value="1"/>
</dbReference>
<dbReference type="PANTHER" id="PTHR12934">
    <property type="entry name" value="50S RIBOSOMAL PROTEIN L15"/>
    <property type="match status" value="1"/>
</dbReference>
<dbReference type="PANTHER" id="PTHR12934:SF11">
    <property type="entry name" value="LARGE RIBOSOMAL SUBUNIT PROTEIN UL15M"/>
    <property type="match status" value="1"/>
</dbReference>
<dbReference type="Pfam" id="PF00828">
    <property type="entry name" value="Ribosomal_L27A"/>
    <property type="match status" value="1"/>
</dbReference>
<dbReference type="SUPFAM" id="SSF52080">
    <property type="entry name" value="Ribosomal proteins L15p and L18e"/>
    <property type="match status" value="1"/>
</dbReference>
<dbReference type="PROSITE" id="PS00475">
    <property type="entry name" value="RIBOSOMAL_L15"/>
    <property type="match status" value="1"/>
</dbReference>
<comment type="function">
    <text evidence="1">Binds to the 23S rRNA.</text>
</comment>
<comment type="subunit">
    <text evidence="1">Part of the 50S ribosomal subunit.</text>
</comment>
<comment type="similarity">
    <text evidence="1">Belongs to the universal ribosomal protein uL15 family.</text>
</comment>
<sequence length="150" mass="16136">MRLEDIRPQAGSTRRRRRLGRGVSAGQGASCGKGMRGQKARKGGSTRPGFEGGQTPLYRRLPKLKHFPRYRRRLEYTLVNLRALADLPAGSEVSLESLMERGIVTTNDGPLKILGDGEVSVPLTIRAAAITASAKVKVEAAGGRVEILGS</sequence>
<keyword id="KW-1185">Reference proteome</keyword>
<keyword id="KW-0687">Ribonucleoprotein</keyword>
<keyword id="KW-0689">Ribosomal protein</keyword>
<keyword id="KW-0694">RNA-binding</keyword>
<keyword id="KW-0699">rRNA-binding</keyword>
<feature type="chain" id="PRO_0000251575" description="Large ribosomal subunit protein uL15">
    <location>
        <begin position="1"/>
        <end position="150"/>
    </location>
</feature>
<feature type="region of interest" description="Disordered" evidence="2">
    <location>
        <begin position="1"/>
        <end position="57"/>
    </location>
</feature>
<feature type="compositionally biased region" description="Gly residues" evidence="2">
    <location>
        <begin position="23"/>
        <end position="35"/>
    </location>
</feature>
<name>RL15_SYNJB</name>
<gene>
    <name evidence="1" type="primary">rplO</name>
    <name type="ordered locus">CYB_2614</name>
</gene>